<accession>O93427</accession>
<proteinExistence type="evidence at protein level"/>
<reference key="1">
    <citation type="journal article" date="1998" name="Biochem. J.">
        <title>Cloning of subunits of convulxin, a collagen-like platelet-aggregating protein from Crotalus durissus terrificus venom.</title>
        <authorList>
            <person name="Leduc M."/>
            <person name="Bon C."/>
        </authorList>
    </citation>
    <scope>NUCLEOTIDE SEQUENCE [MRNA]</scope>
    <scope>PROTEIN SEQUENCE OF 24-53; 99-109 AND 126-145</scope>
    <source>
        <tissue>Venom</tissue>
        <tissue>Venom gland</tissue>
    </source>
</reference>
<reference key="2">
    <citation type="submission" date="2002-08" db="EMBL/GenBank/DDBJ databases">
        <authorList>
            <person name="Radis-Baptista G."/>
            <person name="Camargo A.C.M."/>
            <person name="Yamane T."/>
        </authorList>
    </citation>
    <scope>NUCLEOTIDE SEQUENCE [MRNA]</scope>
    <source>
        <tissue>Venom gland</tissue>
    </source>
</reference>
<reference key="3">
    <citation type="journal article" date="1997" name="J. Biol. Chem.">
        <title>Platelet activation and signal transduction by convulxin, a C-type lectin from Crotalus durissus terrificus (tropical rattlesnake) venom via the p62/GPVI collagen receptor.</title>
        <authorList>
            <person name="Polgar J."/>
            <person name="Clemetson J.M."/>
            <person name="Kehrel B.E."/>
            <person name="Wiedemann M."/>
            <person name="Magnenat E.M."/>
            <person name="Wells T.N."/>
            <person name="Clemetson K.J."/>
        </authorList>
    </citation>
    <scope>PROTEIN SEQUENCE OF 24-43</scope>
    <scope>FUNCTION</scope>
    <source>
        <tissue>Venom</tissue>
    </source>
</reference>
<reference key="4">
    <citation type="journal article" date="2005" name="J. Thromb. Haemost.">
        <title>Translocation of GPIb and Fc receptor gamma-chain to cytoskeleton in mucetin-activated platelets.</title>
        <authorList>
            <person name="Lu Q."/>
            <person name="Clemetson J.M."/>
            <person name="Clemetson K.J."/>
        </authorList>
    </citation>
    <scope>FUNCTION</scope>
</reference>
<reference key="5">
    <citation type="journal article" date="2003" name="Biochem. Biophys. Res. Commun.">
        <title>Crystal structure of the platelet activator convulxin, a disulfide-linked alpha4beta4 cyclic tetramer from the venom of Crotalus durissus terrificus.</title>
        <authorList>
            <person name="Murakami M.T."/>
            <person name="Zela S.P."/>
            <person name="Gava L.M."/>
            <person name="Michelan-Duarte S."/>
            <person name="Cintra A.C.O."/>
            <person name="Arni R.K."/>
        </authorList>
    </citation>
    <scope>X-RAY CRYSTALLOGRAPHY (2.4 ANGSTROMS) OF 24-148</scope>
</reference>
<reference key="6">
    <citation type="journal article" date="2004" name="Acta Crystallogr. D">
        <title>Structure of the snake-venom toxin convulxin.</title>
        <authorList>
            <person name="Batuwangala T."/>
            <person name="Leduc M."/>
            <person name="Gibbins J.M."/>
            <person name="Bon C."/>
            <person name="Jones E.Y."/>
        </authorList>
    </citation>
    <scope>X-RAY CRYSTALLOGRAPHY (2.7 ANGSTROMS) OF 25-148</scope>
</reference>
<name>SLB_CRODU</name>
<dbReference type="EMBL" id="Y16349">
    <property type="protein sequence ID" value="CAA76182.1"/>
    <property type="molecule type" value="mRNA"/>
</dbReference>
<dbReference type="EMBL" id="AF541881">
    <property type="protein sequence ID" value="AAQ11362.1"/>
    <property type="molecule type" value="mRNA"/>
</dbReference>
<dbReference type="PDB" id="1UMR">
    <property type="method" value="X-ray"/>
    <property type="resolution" value="2.40 A"/>
    <property type="chains" value="C/D=24-148"/>
</dbReference>
<dbReference type="PDB" id="1UOS">
    <property type="method" value="X-ray"/>
    <property type="resolution" value="2.70 A"/>
    <property type="chains" value="B/D=23-148"/>
</dbReference>
<dbReference type="PDBsum" id="1UMR"/>
<dbReference type="PDBsum" id="1UOS"/>
<dbReference type="SMR" id="O93427"/>
<dbReference type="ComplexPortal" id="CPX-2810">
    <property type="entry name" value="Convulxin venom toxin complex"/>
</dbReference>
<dbReference type="MEROPS" id="I63.002"/>
<dbReference type="EvolutionaryTrace" id="O93427"/>
<dbReference type="GO" id="GO:0005576">
    <property type="term" value="C:extracellular region"/>
    <property type="evidence" value="ECO:0007669"/>
    <property type="project" value="UniProtKB-SubCell"/>
</dbReference>
<dbReference type="GO" id="GO:0090729">
    <property type="term" value="F:toxin activity"/>
    <property type="evidence" value="ECO:0007669"/>
    <property type="project" value="UniProtKB-KW"/>
</dbReference>
<dbReference type="FunFam" id="3.10.100.10:FF:000087">
    <property type="entry name" value="Snaclec rhodocetin subunit delta"/>
    <property type="match status" value="1"/>
</dbReference>
<dbReference type="Gene3D" id="3.10.100.10">
    <property type="entry name" value="Mannose-Binding Protein A, subunit A"/>
    <property type="match status" value="1"/>
</dbReference>
<dbReference type="InterPro" id="IPR001304">
    <property type="entry name" value="C-type_lectin-like"/>
</dbReference>
<dbReference type="InterPro" id="IPR016186">
    <property type="entry name" value="C-type_lectin-like/link_sf"/>
</dbReference>
<dbReference type="InterPro" id="IPR050111">
    <property type="entry name" value="C-type_lectin/snaclec_domain"/>
</dbReference>
<dbReference type="InterPro" id="IPR018378">
    <property type="entry name" value="C-type_lectin_CS"/>
</dbReference>
<dbReference type="InterPro" id="IPR016187">
    <property type="entry name" value="CTDL_fold"/>
</dbReference>
<dbReference type="PANTHER" id="PTHR22803">
    <property type="entry name" value="MANNOSE, PHOSPHOLIPASE, LECTIN RECEPTOR RELATED"/>
    <property type="match status" value="1"/>
</dbReference>
<dbReference type="Pfam" id="PF00059">
    <property type="entry name" value="Lectin_C"/>
    <property type="match status" value="1"/>
</dbReference>
<dbReference type="PRINTS" id="PR01504">
    <property type="entry name" value="PNCREATITSAP"/>
</dbReference>
<dbReference type="SMART" id="SM00034">
    <property type="entry name" value="CLECT"/>
    <property type="match status" value="1"/>
</dbReference>
<dbReference type="SUPFAM" id="SSF56436">
    <property type="entry name" value="C-type lectin-like"/>
    <property type="match status" value="1"/>
</dbReference>
<dbReference type="PROSITE" id="PS00615">
    <property type="entry name" value="C_TYPE_LECTIN_1"/>
    <property type="match status" value="1"/>
</dbReference>
<dbReference type="PROSITE" id="PS50041">
    <property type="entry name" value="C_TYPE_LECTIN_2"/>
    <property type="match status" value="1"/>
</dbReference>
<protein>
    <recommendedName>
        <fullName>Snaclec convulxin subunit beta</fullName>
        <shortName>CVX-beta</shortName>
    </recommendedName>
</protein>
<keyword id="KW-0002">3D-structure</keyword>
<keyword id="KW-0903">Direct protein sequencing</keyword>
<keyword id="KW-1015">Disulfide bond</keyword>
<keyword id="KW-1199">Hemostasis impairing toxin</keyword>
<keyword id="KW-1202">Platelet aggregation activating toxin</keyword>
<keyword id="KW-0964">Secreted</keyword>
<keyword id="KW-0732">Signal</keyword>
<keyword id="KW-0800">Toxin</keyword>
<comment type="function">
    <text evidence="2 3">Snake venom lectin that activates platelets by binding to the platelet collagen receptor glycoprotein VI (GP6) (PubMed:9153205). The indirect activation of integrin alpha-IIb/beta-3 (ITGA2B/ITGB3) also induced by the toxin is upstream the cytoskeletal translocation of GPIb, FcRgamma (FCER1G) and 14-3-3zeta (YWHAZ) (PubMed:16102113).</text>
</comment>
<comment type="subunit">
    <text>Tetramer of heterodimers of alpha and beta subunits (alphabeta)(4); disulfide-linked.</text>
</comment>
<comment type="subcellular location">
    <subcellularLocation>
        <location>Secreted</location>
    </subcellularLocation>
</comment>
<comment type="tissue specificity">
    <text>Expressed by the venom gland.</text>
</comment>
<comment type="miscellaneous">
    <text evidence="6">Negative results: does not act by binding to GPIb.</text>
</comment>
<comment type="similarity">
    <text evidence="5">Belongs to the snaclec family.</text>
</comment>
<organism>
    <name type="scientific">Crotalus durissus terrificus</name>
    <name type="common">South American rattlesnake</name>
    <dbReference type="NCBI Taxonomy" id="8732"/>
    <lineage>
        <taxon>Eukaryota</taxon>
        <taxon>Metazoa</taxon>
        <taxon>Chordata</taxon>
        <taxon>Craniata</taxon>
        <taxon>Vertebrata</taxon>
        <taxon>Euteleostomi</taxon>
        <taxon>Lepidosauria</taxon>
        <taxon>Squamata</taxon>
        <taxon>Bifurcata</taxon>
        <taxon>Unidentata</taxon>
        <taxon>Episquamata</taxon>
        <taxon>Toxicofera</taxon>
        <taxon>Serpentes</taxon>
        <taxon>Colubroidea</taxon>
        <taxon>Viperidae</taxon>
        <taxon>Crotalinae</taxon>
        <taxon>Crotalus</taxon>
    </lineage>
</organism>
<feature type="signal peptide" evidence="3 4">
    <location>
        <begin position="1"/>
        <end position="23"/>
    </location>
</feature>
<feature type="chain" id="PRO_0000017529" description="Snaclec convulxin subunit beta">
    <location>
        <begin position="24"/>
        <end position="148"/>
    </location>
</feature>
<feature type="domain" description="C-type lectin" evidence="1">
    <location>
        <begin position="34"/>
        <end position="148"/>
    </location>
</feature>
<feature type="disulfide bond" description="Interchain (with C-158 in subunit alpha)">
    <location>
        <position position="26"/>
    </location>
</feature>
<feature type="disulfide bond">
    <location>
        <begin position="27"/>
        <end position="38"/>
    </location>
</feature>
<feature type="disulfide bond">
    <location>
        <begin position="55"/>
        <end position="144"/>
    </location>
</feature>
<feature type="disulfide bond" description="Interchain (with C-104 in subunit alpha)">
    <location>
        <position position="100"/>
    </location>
</feature>
<feature type="disulfide bond">
    <location>
        <begin position="121"/>
        <end position="136"/>
    </location>
</feature>
<feature type="sequence conflict" description="In Ref. 2; AAQ11362." evidence="5" ref="2">
    <original>K</original>
    <variation>E</variation>
    <location>
        <position position="113"/>
    </location>
</feature>
<feature type="sequence conflict" description="In Ref. 2; AAQ11362." evidence="5" ref="2">
    <original>A</original>
    <variation>V</variation>
    <location>
        <position position="148"/>
    </location>
</feature>
<feature type="strand" evidence="7">
    <location>
        <begin position="32"/>
        <end position="34"/>
    </location>
</feature>
<feature type="strand" evidence="7">
    <location>
        <begin position="37"/>
        <end position="46"/>
    </location>
</feature>
<feature type="helix" evidence="7">
    <location>
        <begin position="48"/>
        <end position="58"/>
    </location>
</feature>
<feature type="helix" evidence="7">
    <location>
        <begin position="70"/>
        <end position="81"/>
    </location>
</feature>
<feature type="strand" evidence="7">
    <location>
        <begin position="85"/>
        <end position="90"/>
    </location>
</feature>
<feature type="turn" evidence="7">
    <location>
        <begin position="96"/>
        <end position="98"/>
    </location>
</feature>
<feature type="strand" evidence="7">
    <location>
        <begin position="102"/>
        <end position="104"/>
    </location>
</feature>
<feature type="strand" evidence="7">
    <location>
        <begin position="120"/>
        <end position="127"/>
    </location>
</feature>
<feature type="strand" evidence="7">
    <location>
        <begin position="131"/>
        <end position="135"/>
    </location>
</feature>
<feature type="strand" evidence="7">
    <location>
        <begin position="140"/>
        <end position="147"/>
    </location>
</feature>
<sequence>MGRFIFVSFGLLVVFLSLSGSEAGFCCPSHWSSYDRYCYKVFKQEMTWADAEKFCTQQHTGSHLVSFHSTEEVDFVVKMTHQSLKSTFFWIGANNIWNKCNWQWSDGTKPEYKEWHEEFECLISRTFDNQWLSAPCSDTYSFVCKFEA</sequence>
<evidence type="ECO:0000255" key="1">
    <source>
        <dbReference type="PROSITE-ProRule" id="PRU00040"/>
    </source>
</evidence>
<evidence type="ECO:0000269" key="2">
    <source>
    </source>
</evidence>
<evidence type="ECO:0000269" key="3">
    <source>
    </source>
</evidence>
<evidence type="ECO:0000269" key="4">
    <source>
    </source>
</evidence>
<evidence type="ECO:0000305" key="5"/>
<evidence type="ECO:0000305" key="6">
    <source>
    </source>
</evidence>
<evidence type="ECO:0007829" key="7">
    <source>
        <dbReference type="PDB" id="1UMR"/>
    </source>
</evidence>